<sequence length="355" mass="40880">MGCRQSSEEKEAARRSRRIDRHLRSESQRQRREIKLLLLGTSNSGKSTIVKQMKIIHSGGFNLEACKEYKPLIIYNAIDSLTRIIRALAALKIDFHNPDRAYDAVQLFALTGPAESKGEITPELLGVMRRLWADPGAQACFGRSSEYHLEDNAAYYLNDLERIAAPDYIPTVEDILRSRDMTTGIVENKFTFKELTFKMVDVGGQRSERKKWIHCFEGVTAIIFCVELSGYDLKLYEDNQTSRMAESLRLFDSICNNNWFINTSLILFLNKKDLLSEKIRRIPLSVCFPEYKGQNTYEEAAVYIQRQFEDLNRNKETKEIYSHFTCATDTSNIQFVFDAVTDVIIQNNLKYIGLC</sequence>
<accession>P19627</accession>
<protein>
    <recommendedName>
        <fullName>Guanine nucleotide-binding protein G(z) subunit alpha</fullName>
    </recommendedName>
    <alternativeName>
        <fullName>G(x) alpha chain</fullName>
    </alternativeName>
    <alternativeName>
        <fullName>Gz-alpha</fullName>
    </alternativeName>
</protein>
<evidence type="ECO:0000250" key="1"/>
<evidence type="ECO:0000250" key="2">
    <source>
        <dbReference type="UniProtKB" id="P19086"/>
    </source>
</evidence>
<evidence type="ECO:0000255" key="3">
    <source>
        <dbReference type="PROSITE-ProRule" id="PRU01230"/>
    </source>
</evidence>
<evidence type="ECO:0000256" key="4">
    <source>
        <dbReference type="SAM" id="MobiDB-lite"/>
    </source>
</evidence>
<evidence type="ECO:0000305" key="5"/>
<feature type="initiator methionine" description="Removed" evidence="5">
    <location>
        <position position="1"/>
    </location>
</feature>
<feature type="chain" id="PRO_0000203698" description="Guanine nucleotide-binding protein G(z) subunit alpha">
    <location>
        <begin position="2"/>
        <end position="355"/>
    </location>
</feature>
<feature type="domain" description="G-alpha" evidence="3">
    <location>
        <begin position="32"/>
        <end position="355"/>
    </location>
</feature>
<feature type="region of interest" description="Disordered" evidence="4">
    <location>
        <begin position="1"/>
        <end position="26"/>
    </location>
</feature>
<feature type="region of interest" description="G1 motif" evidence="3">
    <location>
        <begin position="35"/>
        <end position="48"/>
    </location>
</feature>
<feature type="region of interest" description="G2 motif" evidence="3">
    <location>
        <begin position="174"/>
        <end position="182"/>
    </location>
</feature>
<feature type="region of interest" description="G3 motif" evidence="3">
    <location>
        <begin position="197"/>
        <end position="206"/>
    </location>
</feature>
<feature type="region of interest" description="G4 motif" evidence="3">
    <location>
        <begin position="266"/>
        <end position="273"/>
    </location>
</feature>
<feature type="region of interest" description="G5 motif" evidence="3">
    <location>
        <begin position="325"/>
        <end position="330"/>
    </location>
</feature>
<feature type="compositionally biased region" description="Basic and acidic residues" evidence="4">
    <location>
        <begin position="1"/>
        <end position="14"/>
    </location>
</feature>
<feature type="binding site" evidence="1">
    <location>
        <begin position="40"/>
        <end position="47"/>
    </location>
    <ligand>
        <name>GTP</name>
        <dbReference type="ChEBI" id="CHEBI:37565"/>
    </ligand>
</feature>
<feature type="binding site" evidence="1">
    <location>
        <position position="47"/>
    </location>
    <ligand>
        <name>Mg(2+)</name>
        <dbReference type="ChEBI" id="CHEBI:18420"/>
    </ligand>
</feature>
<feature type="binding site" evidence="1">
    <location>
        <begin position="176"/>
        <end position="182"/>
    </location>
    <ligand>
        <name>GTP</name>
        <dbReference type="ChEBI" id="CHEBI:37565"/>
    </ligand>
</feature>
<feature type="binding site" evidence="1">
    <location>
        <position position="182"/>
    </location>
    <ligand>
        <name>Mg(2+)</name>
        <dbReference type="ChEBI" id="CHEBI:18420"/>
    </ligand>
</feature>
<feature type="binding site" evidence="1">
    <location>
        <begin position="201"/>
        <end position="205"/>
    </location>
    <ligand>
        <name>GTP</name>
        <dbReference type="ChEBI" id="CHEBI:37565"/>
    </ligand>
</feature>
<feature type="binding site" evidence="1">
    <location>
        <begin position="270"/>
        <end position="273"/>
    </location>
    <ligand>
        <name>GTP</name>
        <dbReference type="ChEBI" id="CHEBI:37565"/>
    </ligand>
</feature>
<feature type="binding site" evidence="1">
    <location>
        <position position="327"/>
    </location>
    <ligand>
        <name>GTP</name>
        <dbReference type="ChEBI" id="CHEBI:37565"/>
    </ligand>
</feature>
<feature type="lipid moiety-binding region" description="N-myristoyl glycine" evidence="1">
    <location>
        <position position="2"/>
    </location>
</feature>
<feature type="lipid moiety-binding region" description="S-palmitoyl cysteine" evidence="1">
    <location>
        <position position="3"/>
    </location>
</feature>
<keyword id="KW-0342">GTP-binding</keyword>
<keyword id="KW-0449">Lipoprotein</keyword>
<keyword id="KW-0460">Magnesium</keyword>
<keyword id="KW-0472">Membrane</keyword>
<keyword id="KW-0479">Metal-binding</keyword>
<keyword id="KW-0519">Myristate</keyword>
<keyword id="KW-0547">Nucleotide-binding</keyword>
<keyword id="KW-0564">Palmitate</keyword>
<keyword id="KW-1185">Reference proteome</keyword>
<keyword id="KW-0807">Transducer</keyword>
<comment type="function">
    <text>Guanine nucleotide-binding proteins (G proteins) are involved as modulators or transducers in various transmembrane signaling systems.</text>
</comment>
<comment type="subunit">
    <text evidence="2">G-proteins are composed of 3 units; alpha, beta and gamma. The alpha chain contains the guanine nucleotide binding site. Interacts with ADGRB2 (By similarity).</text>
</comment>
<comment type="subcellular location">
    <subcellularLocation>
        <location>Membrane</location>
        <topology>Lipid-anchor</topology>
    </subcellularLocation>
</comment>
<comment type="similarity">
    <text evidence="5">Belongs to the G-alpha family. G(i/o/t/z) subfamily.</text>
</comment>
<gene>
    <name type="primary">Gnaz</name>
</gene>
<dbReference type="EMBL" id="J03773">
    <property type="protein sequence ID" value="AAA41304.1"/>
    <property type="molecule type" value="mRNA"/>
</dbReference>
<dbReference type="EMBL" id="U77485">
    <property type="protein sequence ID" value="AAD09877.1"/>
    <property type="molecule type" value="Genomic_DNA"/>
</dbReference>
<dbReference type="EMBL" id="U77484">
    <property type="protein sequence ID" value="AAD09877.1"/>
    <property type="status" value="JOINED"/>
    <property type="molecule type" value="Genomic_DNA"/>
</dbReference>
<dbReference type="PIR" id="A31316">
    <property type="entry name" value="RGRTGX"/>
</dbReference>
<dbReference type="RefSeq" id="NP_037321.1">
    <property type="nucleotide sequence ID" value="NM_013189.2"/>
</dbReference>
<dbReference type="RefSeq" id="XP_008771088.1">
    <property type="nucleotide sequence ID" value="XM_008772866.2"/>
</dbReference>
<dbReference type="RefSeq" id="XP_008771089.1">
    <property type="nucleotide sequence ID" value="XM_008772867.3"/>
</dbReference>
<dbReference type="RefSeq" id="XP_017457054.1">
    <property type="nucleotide sequence ID" value="XM_017601565.1"/>
</dbReference>
<dbReference type="SMR" id="P19627"/>
<dbReference type="BioGRID" id="247768">
    <property type="interactions" value="2"/>
</dbReference>
<dbReference type="FunCoup" id="P19627">
    <property type="interactions" value="936"/>
</dbReference>
<dbReference type="IntAct" id="P19627">
    <property type="interactions" value="1"/>
</dbReference>
<dbReference type="MINT" id="P19627"/>
<dbReference type="STRING" id="10116.ENSRNOP00000001779"/>
<dbReference type="iPTMnet" id="P19627"/>
<dbReference type="PhosphoSitePlus" id="P19627"/>
<dbReference type="SwissPalm" id="P19627"/>
<dbReference type="PaxDb" id="10116-ENSRNOP00000001779"/>
<dbReference type="Ensembl" id="ENSRNOT00000001779.5">
    <property type="protein sequence ID" value="ENSRNOP00000001779.2"/>
    <property type="gene ID" value="ENSRNOG00000001313.5"/>
</dbReference>
<dbReference type="GeneID" id="25740"/>
<dbReference type="KEGG" id="rno:25740"/>
<dbReference type="UCSC" id="RGD:2717">
    <property type="organism name" value="rat"/>
</dbReference>
<dbReference type="AGR" id="RGD:2717"/>
<dbReference type="CTD" id="2781"/>
<dbReference type="RGD" id="2717">
    <property type="gene designation" value="Gnaz"/>
</dbReference>
<dbReference type="eggNOG" id="KOG0082">
    <property type="taxonomic scope" value="Eukaryota"/>
</dbReference>
<dbReference type="GeneTree" id="ENSGT00940000160353"/>
<dbReference type="HOGENOM" id="CLU_014184_6_0_1"/>
<dbReference type="InParanoid" id="P19627"/>
<dbReference type="OMA" id="ANSHWFK"/>
<dbReference type="OrthoDB" id="5817230at2759"/>
<dbReference type="PhylomeDB" id="P19627"/>
<dbReference type="TreeFam" id="TF300673"/>
<dbReference type="Reactome" id="R-RNO-418597">
    <property type="pathway name" value="G alpha (z) signalling events"/>
</dbReference>
<dbReference type="PRO" id="PR:P19627"/>
<dbReference type="Proteomes" id="UP000002494">
    <property type="component" value="Chromosome 20"/>
</dbReference>
<dbReference type="Bgee" id="ENSRNOG00000001313">
    <property type="expression patterns" value="Expressed in frontal cortex and 14 other cell types or tissues"/>
</dbReference>
<dbReference type="GO" id="GO:0044297">
    <property type="term" value="C:cell body"/>
    <property type="evidence" value="ECO:0000266"/>
    <property type="project" value="RGD"/>
</dbReference>
<dbReference type="GO" id="GO:0005737">
    <property type="term" value="C:cytoplasm"/>
    <property type="evidence" value="ECO:0000318"/>
    <property type="project" value="GO_Central"/>
</dbReference>
<dbReference type="GO" id="GO:0030425">
    <property type="term" value="C:dendrite"/>
    <property type="evidence" value="ECO:0000266"/>
    <property type="project" value="RGD"/>
</dbReference>
<dbReference type="GO" id="GO:0005834">
    <property type="term" value="C:heterotrimeric G-protein complex"/>
    <property type="evidence" value="ECO:0000318"/>
    <property type="project" value="GO_Central"/>
</dbReference>
<dbReference type="GO" id="GO:0005886">
    <property type="term" value="C:plasma membrane"/>
    <property type="evidence" value="ECO:0000266"/>
    <property type="project" value="RGD"/>
</dbReference>
<dbReference type="GO" id="GO:0045202">
    <property type="term" value="C:synapse"/>
    <property type="evidence" value="ECO:0000266"/>
    <property type="project" value="RGD"/>
</dbReference>
<dbReference type="GO" id="GO:0010855">
    <property type="term" value="F:adenylate cyclase inhibitor activity"/>
    <property type="evidence" value="ECO:0000266"/>
    <property type="project" value="RGD"/>
</dbReference>
<dbReference type="GO" id="GO:0001664">
    <property type="term" value="F:G protein-coupled receptor binding"/>
    <property type="evidence" value="ECO:0000318"/>
    <property type="project" value="GO_Central"/>
</dbReference>
<dbReference type="GO" id="GO:0031821">
    <property type="term" value="F:G protein-coupled serotonin receptor binding"/>
    <property type="evidence" value="ECO:0000353"/>
    <property type="project" value="RGD"/>
</dbReference>
<dbReference type="GO" id="GO:0031683">
    <property type="term" value="F:G-protein beta/gamma-subunit complex binding"/>
    <property type="evidence" value="ECO:0000318"/>
    <property type="project" value="GO_Central"/>
</dbReference>
<dbReference type="GO" id="GO:0005525">
    <property type="term" value="F:GTP binding"/>
    <property type="evidence" value="ECO:0007669"/>
    <property type="project" value="UniProtKB-KW"/>
</dbReference>
<dbReference type="GO" id="GO:0003924">
    <property type="term" value="F:GTPase activity"/>
    <property type="evidence" value="ECO:0000318"/>
    <property type="project" value="GO_Central"/>
</dbReference>
<dbReference type="GO" id="GO:0046872">
    <property type="term" value="F:metal ion binding"/>
    <property type="evidence" value="ECO:0007669"/>
    <property type="project" value="UniProtKB-KW"/>
</dbReference>
<dbReference type="GO" id="GO:0007193">
    <property type="term" value="P:adenylate cyclase-inhibiting G protein-coupled receptor signaling pathway"/>
    <property type="evidence" value="ECO:0000315"/>
    <property type="project" value="RGD"/>
</dbReference>
<dbReference type="GO" id="GO:0007188">
    <property type="term" value="P:adenylate cyclase-modulating G protein-coupled receptor signaling pathway"/>
    <property type="evidence" value="ECO:0000315"/>
    <property type="project" value="RGD"/>
</dbReference>
<dbReference type="GO" id="GO:0098664">
    <property type="term" value="P:G protein-coupled serotonin receptor signaling pathway"/>
    <property type="evidence" value="ECO:0000266"/>
    <property type="project" value="RGD"/>
</dbReference>
<dbReference type="GO" id="GO:0046676">
    <property type="term" value="P:negative regulation of insulin secretion"/>
    <property type="evidence" value="ECO:0000266"/>
    <property type="project" value="RGD"/>
</dbReference>
<dbReference type="CDD" id="cd00066">
    <property type="entry name" value="G-alpha"/>
    <property type="match status" value="1"/>
</dbReference>
<dbReference type="FunFam" id="3.40.50.300:FF:002307">
    <property type="entry name" value="Guanine nucleotide-binding protein G(k) subunit alpha"/>
    <property type="match status" value="1"/>
</dbReference>
<dbReference type="FunFam" id="1.10.400.10:FF:000006">
    <property type="entry name" value="Guanine nucleotide-binding protein G(Z) subunit alpha"/>
    <property type="match status" value="1"/>
</dbReference>
<dbReference type="Gene3D" id="1.10.400.10">
    <property type="entry name" value="GI Alpha 1, domain 2-like"/>
    <property type="match status" value="1"/>
</dbReference>
<dbReference type="Gene3D" id="3.40.50.300">
    <property type="entry name" value="P-loop containing nucleotide triphosphate hydrolases"/>
    <property type="match status" value="1"/>
</dbReference>
<dbReference type="InterPro" id="IPR001408">
    <property type="entry name" value="Gprotein_alpha_I"/>
</dbReference>
<dbReference type="InterPro" id="IPR001019">
    <property type="entry name" value="Gprotein_alpha_su"/>
</dbReference>
<dbReference type="InterPro" id="IPR011025">
    <property type="entry name" value="GproteinA_insert"/>
</dbReference>
<dbReference type="InterPro" id="IPR027417">
    <property type="entry name" value="P-loop_NTPase"/>
</dbReference>
<dbReference type="PANTHER" id="PTHR10218">
    <property type="entry name" value="GTP-BINDING PROTEIN ALPHA SUBUNIT"/>
    <property type="match status" value="1"/>
</dbReference>
<dbReference type="PANTHER" id="PTHR10218:SF65">
    <property type="entry name" value="GUANINE NUCLEOTIDE-BINDING PROTEIN G(Z) SUBUNIT ALPHA"/>
    <property type="match status" value="1"/>
</dbReference>
<dbReference type="Pfam" id="PF00503">
    <property type="entry name" value="G-alpha"/>
    <property type="match status" value="1"/>
</dbReference>
<dbReference type="PRINTS" id="PR00318">
    <property type="entry name" value="GPROTEINA"/>
</dbReference>
<dbReference type="PRINTS" id="PR00441">
    <property type="entry name" value="GPROTEINAI"/>
</dbReference>
<dbReference type="SMART" id="SM00275">
    <property type="entry name" value="G_alpha"/>
    <property type="match status" value="1"/>
</dbReference>
<dbReference type="SUPFAM" id="SSF52540">
    <property type="entry name" value="P-loop containing nucleoside triphosphate hydrolases"/>
    <property type="match status" value="1"/>
</dbReference>
<dbReference type="SUPFAM" id="SSF47895">
    <property type="entry name" value="Transducin (alpha subunit), insertion domain"/>
    <property type="match status" value="1"/>
</dbReference>
<dbReference type="PROSITE" id="PS51882">
    <property type="entry name" value="G_ALPHA"/>
    <property type="match status" value="1"/>
</dbReference>
<organism>
    <name type="scientific">Rattus norvegicus</name>
    <name type="common">Rat</name>
    <dbReference type="NCBI Taxonomy" id="10116"/>
    <lineage>
        <taxon>Eukaryota</taxon>
        <taxon>Metazoa</taxon>
        <taxon>Chordata</taxon>
        <taxon>Craniata</taxon>
        <taxon>Vertebrata</taxon>
        <taxon>Euteleostomi</taxon>
        <taxon>Mammalia</taxon>
        <taxon>Eutheria</taxon>
        <taxon>Euarchontoglires</taxon>
        <taxon>Glires</taxon>
        <taxon>Rodentia</taxon>
        <taxon>Myomorpha</taxon>
        <taxon>Muroidea</taxon>
        <taxon>Muridae</taxon>
        <taxon>Murinae</taxon>
        <taxon>Rattus</taxon>
    </lineage>
</organism>
<name>GNAZ_RAT</name>
<proteinExistence type="evidence at transcript level"/>
<reference key="1">
    <citation type="journal article" date="1988" name="Proc. Natl. Acad. Sci. U.S.A.">
        <title>Sequence analysis of cDNA and genomic DNA for a putative pertussis toxin-insensitive guanine nucleotide-binding regulatory protein alpha subunit.</title>
        <authorList>
            <person name="Matsuoka M."/>
            <person name="Itoh H."/>
            <person name="Kozasa T."/>
            <person name="Kaziro Y."/>
        </authorList>
    </citation>
    <scope>NUCLEOTIDE SEQUENCE [MRNA]</scope>
</reference>
<reference key="2">
    <citation type="submission" date="1996-11" db="EMBL/GenBank/DDBJ databases">
        <title>Rat alpha-z gene.</title>
        <authorList>
            <person name="Chang P.-Y."/>
            <person name="Poncz M."/>
            <person name="Zhang H."/>
            <person name="Brass L.F."/>
            <person name="Manning D.R."/>
        </authorList>
    </citation>
    <scope>NUCLEOTIDE SEQUENCE [GENOMIC DNA]</scope>
</reference>